<reference key="1">
    <citation type="journal article" date="1992" name="Nature">
        <title>The C. elegans genome sequencing project: a beginning.</title>
        <authorList>
            <person name="Sulston J."/>
            <person name="Du Z."/>
            <person name="Thomas K."/>
            <person name="Wilson R."/>
            <person name="Hillier L."/>
            <person name="Staden R."/>
            <person name="Halloran N."/>
            <person name="Green P."/>
            <person name="Thierry-Mieg J."/>
            <person name="Qiu L."/>
            <person name="Dear S."/>
            <person name="Coulson A."/>
            <person name="Craxton M."/>
            <person name="Durbin R."/>
            <person name="Berks M."/>
            <person name="Metzstein M."/>
            <person name="Hawkins T."/>
            <person name="Ainscough R."/>
            <person name="Waterston R."/>
        </authorList>
    </citation>
    <scope>NUCLEOTIDE SEQUENCE [LARGE SCALE GENOMIC DNA]</scope>
    <source>
        <strain>Bristol N2</strain>
    </source>
</reference>
<reference key="2">
    <citation type="journal article" date="1998" name="Science">
        <title>Genome sequence of the nematode C. elegans: a platform for investigating biology.</title>
        <authorList>
            <consortium name="The C. elegans sequencing consortium"/>
        </authorList>
    </citation>
    <scope>NUCLEOTIDE SEQUENCE [LARGE SCALE GENOMIC DNA]</scope>
    <source>
        <strain>Bristol N2</strain>
    </source>
</reference>
<name>YKA4_CAEEL</name>
<gene>
    <name type="ORF">B0303.4</name>
</gene>
<proteinExistence type="predicted"/>
<keyword id="KW-1185">Reference proteome</keyword>
<accession>P34256</accession>
<organism>
    <name type="scientific">Caenorhabditis elegans</name>
    <dbReference type="NCBI Taxonomy" id="6239"/>
    <lineage>
        <taxon>Eukaryota</taxon>
        <taxon>Metazoa</taxon>
        <taxon>Ecdysozoa</taxon>
        <taxon>Nematoda</taxon>
        <taxon>Chromadorea</taxon>
        <taxon>Rhabditida</taxon>
        <taxon>Rhabditina</taxon>
        <taxon>Rhabditomorpha</taxon>
        <taxon>Rhabditoidea</taxon>
        <taxon>Rhabditidae</taxon>
        <taxon>Peloderinae</taxon>
        <taxon>Caenorhabditis</taxon>
    </lineage>
</organism>
<dbReference type="EMBL" id="FO080163">
    <property type="protein sequence ID" value="CCD61709.1"/>
    <property type="molecule type" value="Genomic_DNA"/>
</dbReference>
<dbReference type="PIR" id="D88536">
    <property type="entry name" value="D88536"/>
</dbReference>
<dbReference type="PIR" id="S27786">
    <property type="entry name" value="S27786"/>
</dbReference>
<dbReference type="RefSeq" id="NP_498916.1">
    <property type="nucleotide sequence ID" value="NM_066515.6"/>
</dbReference>
<dbReference type="SMR" id="P34256"/>
<dbReference type="FunCoup" id="P34256">
    <property type="interactions" value="402"/>
</dbReference>
<dbReference type="STRING" id="6239.B0303.4.2"/>
<dbReference type="PaxDb" id="6239-B0303.4.2"/>
<dbReference type="PeptideAtlas" id="P34256"/>
<dbReference type="EnsemblMetazoa" id="B0303.4.1">
    <property type="protein sequence ID" value="B0303.4.1"/>
    <property type="gene ID" value="WBGene00015126"/>
</dbReference>
<dbReference type="EnsemblMetazoa" id="B0303.4.2">
    <property type="protein sequence ID" value="B0303.4.2"/>
    <property type="gene ID" value="WBGene00015126"/>
</dbReference>
<dbReference type="GeneID" id="176218"/>
<dbReference type="KEGG" id="cel:CELE_B0303.4"/>
<dbReference type="UCSC" id="B0303.4.1">
    <property type="organism name" value="c. elegans"/>
</dbReference>
<dbReference type="AGR" id="WB:WBGene00015126"/>
<dbReference type="CTD" id="176218"/>
<dbReference type="WormBase" id="B0303.4">
    <property type="protein sequence ID" value="CE29540"/>
    <property type="gene ID" value="WBGene00015126"/>
</dbReference>
<dbReference type="eggNOG" id="ENOG502QU8U">
    <property type="taxonomic scope" value="Eukaryota"/>
</dbReference>
<dbReference type="GeneTree" id="ENSGT00390000014069"/>
<dbReference type="HOGENOM" id="CLU_467880_0_0_1"/>
<dbReference type="InParanoid" id="P34256"/>
<dbReference type="OMA" id="VVEMHTW"/>
<dbReference type="OrthoDB" id="1679758at2759"/>
<dbReference type="PRO" id="PR:P34256"/>
<dbReference type="Proteomes" id="UP000001940">
    <property type="component" value="Chromosome III"/>
</dbReference>
<dbReference type="Bgee" id="WBGene00015126">
    <property type="expression patterns" value="Expressed in adult organism and 4 other cell types or tissues"/>
</dbReference>
<dbReference type="GO" id="GO:0036503">
    <property type="term" value="P:ERAD pathway"/>
    <property type="evidence" value="ECO:0000318"/>
    <property type="project" value="GO_Central"/>
</dbReference>
<dbReference type="CDD" id="cd17057">
    <property type="entry name" value="Ubl_TMUB1_like"/>
    <property type="match status" value="1"/>
</dbReference>
<dbReference type="Gene3D" id="3.10.20.90">
    <property type="entry name" value="Phosphatidylinositol 3-kinase Catalytic Subunit, Chain A, domain 1"/>
    <property type="match status" value="1"/>
</dbReference>
<dbReference type="InterPro" id="IPR040352">
    <property type="entry name" value="TMUB1/2"/>
</dbReference>
<dbReference type="InterPro" id="IPR000626">
    <property type="entry name" value="Ubiquitin-like_dom"/>
</dbReference>
<dbReference type="InterPro" id="IPR029071">
    <property type="entry name" value="Ubiquitin-like_domsf"/>
</dbReference>
<dbReference type="PANTHER" id="PTHR14557">
    <property type="entry name" value="PROTEIN C7ORF21"/>
    <property type="match status" value="1"/>
</dbReference>
<dbReference type="PANTHER" id="PTHR14557:SF5">
    <property type="entry name" value="UBIQUITIN-LIKE DOMAIN-CONTAINING PROTEIN"/>
    <property type="match status" value="1"/>
</dbReference>
<dbReference type="Pfam" id="PF00240">
    <property type="entry name" value="ubiquitin"/>
    <property type="match status" value="1"/>
</dbReference>
<dbReference type="SMART" id="SM00213">
    <property type="entry name" value="UBQ"/>
    <property type="match status" value="1"/>
</dbReference>
<dbReference type="SUPFAM" id="SSF54236">
    <property type="entry name" value="Ubiquitin-like"/>
    <property type="match status" value="1"/>
</dbReference>
<dbReference type="PROSITE" id="PS50053">
    <property type="entry name" value="UBIQUITIN_2"/>
    <property type="match status" value="1"/>
</dbReference>
<protein>
    <recommendedName>
        <fullName>Uncharacterized protein B0303.4</fullName>
    </recommendedName>
</protein>
<evidence type="ECO:0000255" key="1">
    <source>
        <dbReference type="PROSITE-ProRule" id="PRU00214"/>
    </source>
</evidence>
<evidence type="ECO:0000256" key="2">
    <source>
        <dbReference type="SAM" id="MobiDB-lite"/>
    </source>
</evidence>
<sequence length="616" mass="70141">MNALIVKSALEYLELSTVVAILIIIACALLSYQISARRPLYYNLFVVEMHTWTTRRMVQVLHLGQEFTPPVTWERLVQRMRARAPRIQGEQRVAISDTNIVIQSPNTVIDSPAPARSPDVDLITLWDIEMPPPSAGHVPDATRDSQYAAAAAIAILARGDDASLMSRTYRPQLRPPTERSGNTRVDESRPSENSSRHDYVTTDVTYTTPSINPDMQHHLSTRTSNVTQTQPPTNQVFADTPELTEDIVIDQQEEDDEEDDDDDSSDDAIIEDHEEEEGQDDDEETEIEIDRGGPIEEIEQVEVEQNEDPPLDDQEVEAQPEQVLQETKESEFPVIEGPSEGKILIKLKFMNDTEKNTYASLEDTVAKFKVDHFTNLANQVIRLIYQGQLLREDHRTLEEYGLQPGSIVHCHISTTPYTRPGIATLPPIVNNGFRRRPRRSVRAPRDTTPMPSESVPVVDENVTTARRRAAQDRNVGQIYLLLSTMVPILSGIGLAFFRPDRIRDLLRPATLLTISQWVCNLLVDNGLLEQDDDDQETHLQTSTLFWIFGGQMVAVSIFLYYFPDVFDRVGFSIFIIVFLYFVFVVYSRQRRRQPDPVEVQNEMMENQIVQETIRLL</sequence>
<feature type="chain" id="PRO_0000065063" description="Uncharacterized protein B0303.4">
    <location>
        <begin position="1"/>
        <end position="616"/>
    </location>
</feature>
<feature type="domain" description="Ubiquitin-like" evidence="1">
    <location>
        <begin position="343"/>
        <end position="417"/>
    </location>
</feature>
<feature type="region of interest" description="Disordered" evidence="2">
    <location>
        <begin position="166"/>
        <end position="243"/>
    </location>
</feature>
<feature type="region of interest" description="Disordered" evidence="2">
    <location>
        <begin position="272"/>
        <end position="298"/>
    </location>
</feature>
<feature type="compositionally biased region" description="Basic and acidic residues" evidence="2">
    <location>
        <begin position="184"/>
        <end position="200"/>
    </location>
</feature>
<feature type="compositionally biased region" description="Polar residues" evidence="2">
    <location>
        <begin position="221"/>
        <end position="237"/>
    </location>
</feature>
<feature type="compositionally biased region" description="Acidic residues" evidence="2">
    <location>
        <begin position="272"/>
        <end position="287"/>
    </location>
</feature>